<proteinExistence type="inferred from homology"/>
<organism>
    <name type="scientific">Eichhornia crassipes</name>
    <name type="common">Water hyacinth</name>
    <name type="synonym">Piaropus crassipes</name>
    <dbReference type="NCBI Taxonomy" id="44947"/>
    <lineage>
        <taxon>Eukaryota</taxon>
        <taxon>Viridiplantae</taxon>
        <taxon>Streptophyta</taxon>
        <taxon>Embryophyta</taxon>
        <taxon>Tracheophyta</taxon>
        <taxon>Spermatophyta</taxon>
        <taxon>Magnoliopsida</taxon>
        <taxon>Liliopsida</taxon>
        <taxon>Commelinales</taxon>
        <taxon>Pontederiaceae</taxon>
        <taxon>Pontederia</taxon>
        <taxon>Pontederia subgen. Oshunae</taxon>
    </lineage>
</organism>
<feature type="chain" id="PRO_0000143368" description="Maturase K">
    <location>
        <begin position="1"/>
        <end position="504"/>
    </location>
</feature>
<evidence type="ECO:0000255" key="1">
    <source>
        <dbReference type="HAMAP-Rule" id="MF_01390"/>
    </source>
</evidence>
<sequence>MEELQSFLEKDRSWXQHFLYPLLFQEYIYVFAHDHGLNGSIFYEPVNFLGYDKKSSAVLVKRLIIRMYQQNHLICSFNESNRNRFVGHNYYSYFYSLMISEGVSLIVEIPFSLQLKSSIEEIHNLRSIHSIFPFLEDKLSXLNYLXDILIPHPIHMXILVQILQSRSPDAPSLHFLRLFLHQYHNWNSLITPKKSISVISKENKRLFXXLYNSYISECEFLLVFLRKQSSYLPLTSSGVFLERTYYYGKIQRILVWQNFFQKTLWVFKDPXMHYVRYQGKVILGSKGTNFLMKKWKFYFVNLWQYYFHFWSQPCRIHINQLSNYSFYFLGYFSNVLKNPLSVRNQMLENSFLMDTLTKKFDTLVPVIPLISSLSKAKFCTVSGHPISKPIWTDLSDCDIINRFGRICRNLSHYHSGSSKKQSLYRIKYILRLSCARTLARKHKSTVRIFMQRVSSGLLEEFFTEEERVLSLIFPQTTFFSLRGSQRERIWYLDIIRINDLVTNF</sequence>
<protein>
    <recommendedName>
        <fullName evidence="1">Maturase K</fullName>
    </recommendedName>
    <alternativeName>
        <fullName evidence="1">Intron maturase</fullName>
    </alternativeName>
</protein>
<accession>Q9GHB1</accession>
<dbReference type="EMBL" id="AB040212">
    <property type="protein sequence ID" value="BAB16820.2"/>
    <property type="molecule type" value="Genomic_DNA"/>
</dbReference>
<dbReference type="GO" id="GO:0009507">
    <property type="term" value="C:chloroplast"/>
    <property type="evidence" value="ECO:0007669"/>
    <property type="project" value="UniProtKB-SubCell"/>
</dbReference>
<dbReference type="GO" id="GO:0003723">
    <property type="term" value="F:RNA binding"/>
    <property type="evidence" value="ECO:0007669"/>
    <property type="project" value="UniProtKB-KW"/>
</dbReference>
<dbReference type="GO" id="GO:0006397">
    <property type="term" value="P:mRNA processing"/>
    <property type="evidence" value="ECO:0007669"/>
    <property type="project" value="UniProtKB-KW"/>
</dbReference>
<dbReference type="GO" id="GO:0008380">
    <property type="term" value="P:RNA splicing"/>
    <property type="evidence" value="ECO:0007669"/>
    <property type="project" value="UniProtKB-UniRule"/>
</dbReference>
<dbReference type="GO" id="GO:0008033">
    <property type="term" value="P:tRNA processing"/>
    <property type="evidence" value="ECO:0007669"/>
    <property type="project" value="UniProtKB-KW"/>
</dbReference>
<dbReference type="HAMAP" id="MF_01390">
    <property type="entry name" value="MatK"/>
    <property type="match status" value="1"/>
</dbReference>
<dbReference type="InterPro" id="IPR024937">
    <property type="entry name" value="Domain_X"/>
</dbReference>
<dbReference type="InterPro" id="IPR002866">
    <property type="entry name" value="Maturase_MatK"/>
</dbReference>
<dbReference type="InterPro" id="IPR024942">
    <property type="entry name" value="Maturase_MatK_N"/>
</dbReference>
<dbReference type="PANTHER" id="PTHR34811">
    <property type="entry name" value="MATURASE K"/>
    <property type="match status" value="1"/>
</dbReference>
<dbReference type="PANTHER" id="PTHR34811:SF1">
    <property type="entry name" value="MATURASE K"/>
    <property type="match status" value="1"/>
</dbReference>
<dbReference type="Pfam" id="PF01348">
    <property type="entry name" value="Intron_maturas2"/>
    <property type="match status" value="1"/>
</dbReference>
<dbReference type="Pfam" id="PF01824">
    <property type="entry name" value="MatK_N"/>
    <property type="match status" value="1"/>
</dbReference>
<keyword id="KW-0150">Chloroplast</keyword>
<keyword id="KW-0507">mRNA processing</keyword>
<keyword id="KW-0934">Plastid</keyword>
<keyword id="KW-0694">RNA-binding</keyword>
<keyword id="KW-0819">tRNA processing</keyword>
<comment type="function">
    <text evidence="1">Usually encoded in the trnK tRNA gene intron. Probably assists in splicing its own and other chloroplast group II introns.</text>
</comment>
<comment type="subcellular location">
    <subcellularLocation>
        <location>Plastid</location>
        <location>Chloroplast</location>
    </subcellularLocation>
</comment>
<comment type="similarity">
    <text evidence="1">Belongs to the intron maturase 2 family. MatK subfamily.</text>
</comment>
<geneLocation type="chloroplast"/>
<reference key="1">
    <citation type="journal article" date="2000" name="Plant Biol.">
        <title>A phylogenetic analysis of the plastid matK gene with emphasis on Melanthiaceae sensu lato.</title>
        <authorList>
            <person name="Fuse S."/>
            <person name="Tamura M.N."/>
        </authorList>
    </citation>
    <scope>NUCLEOTIDE SEQUENCE [GENOMIC DNA]</scope>
</reference>
<name>MATK_EICCR</name>
<gene>
    <name evidence="1" type="primary">matK</name>
</gene>